<sequence length="285" mass="31480">MKYIGAHVSAAGGLANAAIRAAEIDATAFALFTKNQRQWRAAPLTTQTIDEFKAACEKYHYTSAQILPHDSYLINLGHPVTEALEKSRDAFIDEMQRCEQLGLSLLNFHPGSHLMQISEEDCLARIAESINIALDKTQGVTAVIENTAGQGSNLGFKFEHLAAIIDGVEDKSRVGVCIDTCHAFAAGYDLRTPAECEKTFADFARTVGFKYLRGMHLNDAKSTFGSRVDRHHSLGEGNIGHDAFRWIMQDDRFDGIPLILETINPDIWAEEIAWLKAQQTEKAVA</sequence>
<gene>
    <name evidence="1" type="primary">nfo</name>
    <name type="ordered locus">BWG_1941</name>
</gene>
<feature type="chain" id="PRO_1000203437" description="Probable endonuclease 4">
    <location>
        <begin position="1"/>
        <end position="285"/>
    </location>
</feature>
<feature type="binding site" evidence="1">
    <location>
        <position position="69"/>
    </location>
    <ligand>
        <name>Zn(2+)</name>
        <dbReference type="ChEBI" id="CHEBI:29105"/>
        <label>1</label>
    </ligand>
</feature>
<feature type="binding site" evidence="1">
    <location>
        <position position="109"/>
    </location>
    <ligand>
        <name>Zn(2+)</name>
        <dbReference type="ChEBI" id="CHEBI:29105"/>
        <label>1</label>
    </ligand>
</feature>
<feature type="binding site" evidence="1">
    <location>
        <position position="145"/>
    </location>
    <ligand>
        <name>Zn(2+)</name>
        <dbReference type="ChEBI" id="CHEBI:29105"/>
        <label>1</label>
    </ligand>
</feature>
<feature type="binding site" evidence="1">
    <location>
        <position position="145"/>
    </location>
    <ligand>
        <name>Zn(2+)</name>
        <dbReference type="ChEBI" id="CHEBI:29105"/>
        <label>2</label>
    </ligand>
</feature>
<feature type="binding site" evidence="1">
    <location>
        <position position="179"/>
    </location>
    <ligand>
        <name>Zn(2+)</name>
        <dbReference type="ChEBI" id="CHEBI:29105"/>
        <label>2</label>
    </ligand>
</feature>
<feature type="binding site" evidence="1">
    <location>
        <position position="182"/>
    </location>
    <ligand>
        <name>Zn(2+)</name>
        <dbReference type="ChEBI" id="CHEBI:29105"/>
        <label>3</label>
    </ligand>
</feature>
<feature type="binding site" evidence="1">
    <location>
        <position position="216"/>
    </location>
    <ligand>
        <name>Zn(2+)</name>
        <dbReference type="ChEBI" id="CHEBI:29105"/>
        <label>2</label>
    </ligand>
</feature>
<feature type="binding site" evidence="1">
    <location>
        <position position="229"/>
    </location>
    <ligand>
        <name>Zn(2+)</name>
        <dbReference type="ChEBI" id="CHEBI:29105"/>
        <label>3</label>
    </ligand>
</feature>
<feature type="binding site" evidence="1">
    <location>
        <position position="231"/>
    </location>
    <ligand>
        <name>Zn(2+)</name>
        <dbReference type="ChEBI" id="CHEBI:29105"/>
        <label>3</label>
    </ligand>
</feature>
<feature type="binding site" evidence="1">
    <location>
        <position position="261"/>
    </location>
    <ligand>
        <name>Zn(2+)</name>
        <dbReference type="ChEBI" id="CHEBI:29105"/>
        <label>2</label>
    </ligand>
</feature>
<accession>C4ZU09</accession>
<proteinExistence type="inferred from homology"/>
<organism>
    <name type="scientific">Escherichia coli (strain K12 / MC4100 / BW2952)</name>
    <dbReference type="NCBI Taxonomy" id="595496"/>
    <lineage>
        <taxon>Bacteria</taxon>
        <taxon>Pseudomonadati</taxon>
        <taxon>Pseudomonadota</taxon>
        <taxon>Gammaproteobacteria</taxon>
        <taxon>Enterobacterales</taxon>
        <taxon>Enterobacteriaceae</taxon>
        <taxon>Escherichia</taxon>
    </lineage>
</organism>
<protein>
    <recommendedName>
        <fullName evidence="1">Probable endonuclease 4</fullName>
        <ecNumber evidence="1">3.1.21.2</ecNumber>
    </recommendedName>
    <alternativeName>
        <fullName evidence="1">Endodeoxyribonuclease IV</fullName>
    </alternativeName>
    <alternativeName>
        <fullName evidence="1">Endonuclease IV</fullName>
    </alternativeName>
</protein>
<reference key="1">
    <citation type="journal article" date="2009" name="J. Bacteriol.">
        <title>Genomic sequencing reveals regulatory mutations and recombinational events in the widely used MC4100 lineage of Escherichia coli K-12.</title>
        <authorList>
            <person name="Ferenci T."/>
            <person name="Zhou Z."/>
            <person name="Betteridge T."/>
            <person name="Ren Y."/>
            <person name="Liu Y."/>
            <person name="Feng L."/>
            <person name="Reeves P.R."/>
            <person name="Wang L."/>
        </authorList>
    </citation>
    <scope>NUCLEOTIDE SEQUENCE [LARGE SCALE GENOMIC DNA]</scope>
    <source>
        <strain>K12 / MC4100 / BW2952</strain>
    </source>
</reference>
<name>END4_ECOBW</name>
<keyword id="KW-0227">DNA damage</keyword>
<keyword id="KW-0234">DNA repair</keyword>
<keyword id="KW-0255">Endonuclease</keyword>
<keyword id="KW-0378">Hydrolase</keyword>
<keyword id="KW-0479">Metal-binding</keyword>
<keyword id="KW-0540">Nuclease</keyword>
<keyword id="KW-0862">Zinc</keyword>
<comment type="function">
    <text evidence="1">Endonuclease IV plays a role in DNA repair. It cleaves phosphodiester bonds at apurinic or apyrimidinic (AP) sites, generating a 3'-hydroxyl group and a 5'-terminal sugar phosphate.</text>
</comment>
<comment type="catalytic activity">
    <reaction evidence="1">
        <text>Endonucleolytic cleavage to 5'-phosphooligonucleotide end-products.</text>
        <dbReference type="EC" id="3.1.21.2"/>
    </reaction>
</comment>
<comment type="cofactor">
    <cofactor evidence="1">
        <name>Zn(2+)</name>
        <dbReference type="ChEBI" id="CHEBI:29105"/>
    </cofactor>
    <text evidence="1">Binds 3 Zn(2+) ions.</text>
</comment>
<comment type="similarity">
    <text evidence="1">Belongs to the AP endonuclease 2 family.</text>
</comment>
<dbReference type="EC" id="3.1.21.2" evidence="1"/>
<dbReference type="EMBL" id="CP001396">
    <property type="protein sequence ID" value="ACR63026.1"/>
    <property type="molecule type" value="Genomic_DNA"/>
</dbReference>
<dbReference type="RefSeq" id="WP_000873894.1">
    <property type="nucleotide sequence ID" value="NC_012759.1"/>
</dbReference>
<dbReference type="SMR" id="C4ZU09"/>
<dbReference type="KEGG" id="ebw:BWG_1941"/>
<dbReference type="HOGENOM" id="CLU_025885_0_4_6"/>
<dbReference type="GO" id="GO:0008833">
    <property type="term" value="F:deoxyribonuclease IV (phage-T4-induced) activity"/>
    <property type="evidence" value="ECO:0007669"/>
    <property type="project" value="UniProtKB-UniRule"/>
</dbReference>
<dbReference type="GO" id="GO:0003677">
    <property type="term" value="F:DNA binding"/>
    <property type="evidence" value="ECO:0007669"/>
    <property type="project" value="InterPro"/>
</dbReference>
<dbReference type="GO" id="GO:0003906">
    <property type="term" value="F:DNA-(apurinic or apyrimidinic site) endonuclease activity"/>
    <property type="evidence" value="ECO:0007669"/>
    <property type="project" value="TreeGrafter"/>
</dbReference>
<dbReference type="GO" id="GO:0008081">
    <property type="term" value="F:phosphoric diester hydrolase activity"/>
    <property type="evidence" value="ECO:0007669"/>
    <property type="project" value="TreeGrafter"/>
</dbReference>
<dbReference type="GO" id="GO:0008270">
    <property type="term" value="F:zinc ion binding"/>
    <property type="evidence" value="ECO:0007669"/>
    <property type="project" value="UniProtKB-UniRule"/>
</dbReference>
<dbReference type="GO" id="GO:0006284">
    <property type="term" value="P:base-excision repair"/>
    <property type="evidence" value="ECO:0007669"/>
    <property type="project" value="TreeGrafter"/>
</dbReference>
<dbReference type="CDD" id="cd00019">
    <property type="entry name" value="AP2Ec"/>
    <property type="match status" value="1"/>
</dbReference>
<dbReference type="FunFam" id="3.20.20.150:FF:000001">
    <property type="entry name" value="Probable endonuclease 4"/>
    <property type="match status" value="1"/>
</dbReference>
<dbReference type="Gene3D" id="3.20.20.150">
    <property type="entry name" value="Divalent-metal-dependent TIM barrel enzymes"/>
    <property type="match status" value="1"/>
</dbReference>
<dbReference type="HAMAP" id="MF_00152">
    <property type="entry name" value="Nfo"/>
    <property type="match status" value="1"/>
</dbReference>
<dbReference type="InterPro" id="IPR001719">
    <property type="entry name" value="AP_endonuc_2"/>
</dbReference>
<dbReference type="InterPro" id="IPR018246">
    <property type="entry name" value="AP_endonuc_F2_Zn_BS"/>
</dbReference>
<dbReference type="InterPro" id="IPR036237">
    <property type="entry name" value="Xyl_isomerase-like_sf"/>
</dbReference>
<dbReference type="InterPro" id="IPR013022">
    <property type="entry name" value="Xyl_isomerase-like_TIM-brl"/>
</dbReference>
<dbReference type="NCBIfam" id="TIGR00587">
    <property type="entry name" value="nfo"/>
    <property type="match status" value="1"/>
</dbReference>
<dbReference type="NCBIfam" id="NF002199">
    <property type="entry name" value="PRK01060.1-4"/>
    <property type="match status" value="1"/>
</dbReference>
<dbReference type="PANTHER" id="PTHR21445:SF0">
    <property type="entry name" value="APURINIC-APYRIMIDINIC ENDONUCLEASE"/>
    <property type="match status" value="1"/>
</dbReference>
<dbReference type="PANTHER" id="PTHR21445">
    <property type="entry name" value="ENDONUCLEASE IV ENDODEOXYRIBONUCLEASE IV"/>
    <property type="match status" value="1"/>
</dbReference>
<dbReference type="Pfam" id="PF01261">
    <property type="entry name" value="AP_endonuc_2"/>
    <property type="match status" value="1"/>
</dbReference>
<dbReference type="SMART" id="SM00518">
    <property type="entry name" value="AP2Ec"/>
    <property type="match status" value="1"/>
</dbReference>
<dbReference type="SUPFAM" id="SSF51658">
    <property type="entry name" value="Xylose isomerase-like"/>
    <property type="match status" value="1"/>
</dbReference>
<dbReference type="PROSITE" id="PS00729">
    <property type="entry name" value="AP_NUCLEASE_F2_1"/>
    <property type="match status" value="1"/>
</dbReference>
<dbReference type="PROSITE" id="PS00730">
    <property type="entry name" value="AP_NUCLEASE_F2_2"/>
    <property type="match status" value="1"/>
</dbReference>
<dbReference type="PROSITE" id="PS00731">
    <property type="entry name" value="AP_NUCLEASE_F2_3"/>
    <property type="match status" value="1"/>
</dbReference>
<dbReference type="PROSITE" id="PS51432">
    <property type="entry name" value="AP_NUCLEASE_F2_4"/>
    <property type="match status" value="1"/>
</dbReference>
<evidence type="ECO:0000255" key="1">
    <source>
        <dbReference type="HAMAP-Rule" id="MF_00152"/>
    </source>
</evidence>